<reference key="1">
    <citation type="submission" date="2008-04" db="EMBL/GenBank/DDBJ databases">
        <title>Complete sequence of Yersinia pseudotuberculosis PB1/+.</title>
        <authorList>
            <person name="Copeland A."/>
            <person name="Lucas S."/>
            <person name="Lapidus A."/>
            <person name="Glavina del Rio T."/>
            <person name="Dalin E."/>
            <person name="Tice H."/>
            <person name="Bruce D."/>
            <person name="Goodwin L."/>
            <person name="Pitluck S."/>
            <person name="Munk A.C."/>
            <person name="Brettin T."/>
            <person name="Detter J.C."/>
            <person name="Han C."/>
            <person name="Tapia R."/>
            <person name="Schmutz J."/>
            <person name="Larimer F."/>
            <person name="Land M."/>
            <person name="Hauser L."/>
            <person name="Challacombe J.F."/>
            <person name="Green L."/>
            <person name="Lindler L.E."/>
            <person name="Nikolich M.P."/>
            <person name="Richardson P."/>
        </authorList>
    </citation>
    <scope>NUCLEOTIDE SEQUENCE [LARGE SCALE GENOMIC DNA]</scope>
    <source>
        <strain>PB1/+</strain>
    </source>
</reference>
<name>LEPA_YERPB</name>
<feature type="chain" id="PRO_1000092467" description="Elongation factor 4">
    <location>
        <begin position="1"/>
        <end position="599"/>
    </location>
</feature>
<feature type="domain" description="tr-type G">
    <location>
        <begin position="2"/>
        <end position="184"/>
    </location>
</feature>
<feature type="binding site" evidence="1">
    <location>
        <begin position="14"/>
        <end position="19"/>
    </location>
    <ligand>
        <name>GTP</name>
        <dbReference type="ChEBI" id="CHEBI:37565"/>
    </ligand>
</feature>
<feature type="binding site" evidence="1">
    <location>
        <begin position="131"/>
        <end position="134"/>
    </location>
    <ligand>
        <name>GTP</name>
        <dbReference type="ChEBI" id="CHEBI:37565"/>
    </ligand>
</feature>
<comment type="function">
    <text evidence="1">Required for accurate and efficient protein synthesis under certain stress conditions. May act as a fidelity factor of the translation reaction, by catalyzing a one-codon backward translocation of tRNAs on improperly translocated ribosomes. Back-translocation proceeds from a post-translocation (POST) complex to a pre-translocation (PRE) complex, thus giving elongation factor G a second chance to translocate the tRNAs correctly. Binds to ribosomes in a GTP-dependent manner.</text>
</comment>
<comment type="catalytic activity">
    <reaction evidence="1">
        <text>GTP + H2O = GDP + phosphate + H(+)</text>
        <dbReference type="Rhea" id="RHEA:19669"/>
        <dbReference type="ChEBI" id="CHEBI:15377"/>
        <dbReference type="ChEBI" id="CHEBI:15378"/>
        <dbReference type="ChEBI" id="CHEBI:37565"/>
        <dbReference type="ChEBI" id="CHEBI:43474"/>
        <dbReference type="ChEBI" id="CHEBI:58189"/>
        <dbReference type="EC" id="3.6.5.n1"/>
    </reaction>
</comment>
<comment type="subcellular location">
    <subcellularLocation>
        <location evidence="1">Cell inner membrane</location>
        <topology evidence="1">Peripheral membrane protein</topology>
        <orientation evidence="1">Cytoplasmic side</orientation>
    </subcellularLocation>
</comment>
<comment type="similarity">
    <text evidence="1">Belongs to the TRAFAC class translation factor GTPase superfamily. Classic translation factor GTPase family. LepA subfamily.</text>
</comment>
<keyword id="KW-0997">Cell inner membrane</keyword>
<keyword id="KW-1003">Cell membrane</keyword>
<keyword id="KW-0342">GTP-binding</keyword>
<keyword id="KW-0378">Hydrolase</keyword>
<keyword id="KW-0472">Membrane</keyword>
<keyword id="KW-0547">Nucleotide-binding</keyword>
<keyword id="KW-0648">Protein biosynthesis</keyword>
<proteinExistence type="inferred from homology"/>
<accession>B2KA49</accession>
<organism>
    <name type="scientific">Yersinia pseudotuberculosis serotype IB (strain PB1/+)</name>
    <dbReference type="NCBI Taxonomy" id="502801"/>
    <lineage>
        <taxon>Bacteria</taxon>
        <taxon>Pseudomonadati</taxon>
        <taxon>Pseudomonadota</taxon>
        <taxon>Gammaproteobacteria</taxon>
        <taxon>Enterobacterales</taxon>
        <taxon>Yersiniaceae</taxon>
        <taxon>Yersinia</taxon>
    </lineage>
</organism>
<protein>
    <recommendedName>
        <fullName evidence="1">Elongation factor 4</fullName>
        <shortName evidence="1">EF-4</shortName>
        <ecNumber evidence="1">3.6.5.n1</ecNumber>
    </recommendedName>
    <alternativeName>
        <fullName evidence="1">Ribosomal back-translocase LepA</fullName>
    </alternativeName>
</protein>
<sequence length="599" mass="66709">MKHIRNFSIIAHIDHGKSTLSDRIIQICGGLSEREMAAQVLDSMDLERERGITIKAQSVTLDYHSKDGQTYQLNFIDTPGHVDFSYEVSRSLAACEGALLVVDAGQGVEAQTLANCYTAMEMDLEVVPVLNKIDLPAADPERVAEEIEDIVGIDATDAIRCSAKTGVGVPDVLERLVRDIPAPEGDPNGPLQALIIDSWFDNYLGVVSLIRIKNGSLRKGDKVKVMSTGQSYNADRLGIFTPKRVDRDVLNCGEVGWLVCAIKDILGAPVGDTLTLTRNPAEKSLPGFKKVKPQVYAGLFPISSDDYESFRDALGKLSLNDASLFYEPESSTALGFGFRCGFLGLLHMEIIQERLEREYDLELITTAPTVVYEVITTNQETVYVDSPSKLPALNNIEELREPIAECHMLLPQEYLGNVITLCIEKRGTQTNMVYHGKQVALTYEIPMAEVVLDFFDRLKSTSRGYASLDYNFKRFQTSDMVRVDVLINNERVDALALITHRDNAQYRGRDLVEKMKELIPRQQFDIAIQAAIGNHIIARSTVKQLRKNVLAKCYGGDVSRKKKLLQKQKDGKKRMKQVGNVELPQEAFLAILHVGKDSK</sequence>
<dbReference type="EC" id="3.6.5.n1" evidence="1"/>
<dbReference type="EMBL" id="CP001048">
    <property type="protein sequence ID" value="ACC89960.1"/>
    <property type="molecule type" value="Genomic_DNA"/>
</dbReference>
<dbReference type="RefSeq" id="WP_002209677.1">
    <property type="nucleotide sequence ID" value="NZ_CP009780.1"/>
</dbReference>
<dbReference type="SMR" id="B2KA49"/>
<dbReference type="GeneID" id="57975975"/>
<dbReference type="KEGG" id="ypb:YPTS_3003"/>
<dbReference type="PATRIC" id="fig|502801.10.peg.2434"/>
<dbReference type="GO" id="GO:0005886">
    <property type="term" value="C:plasma membrane"/>
    <property type="evidence" value="ECO:0007669"/>
    <property type="project" value="UniProtKB-SubCell"/>
</dbReference>
<dbReference type="GO" id="GO:0005525">
    <property type="term" value="F:GTP binding"/>
    <property type="evidence" value="ECO:0007669"/>
    <property type="project" value="UniProtKB-UniRule"/>
</dbReference>
<dbReference type="GO" id="GO:0003924">
    <property type="term" value="F:GTPase activity"/>
    <property type="evidence" value="ECO:0007669"/>
    <property type="project" value="UniProtKB-UniRule"/>
</dbReference>
<dbReference type="GO" id="GO:0097216">
    <property type="term" value="F:guanosine tetraphosphate binding"/>
    <property type="evidence" value="ECO:0007669"/>
    <property type="project" value="UniProtKB-ARBA"/>
</dbReference>
<dbReference type="GO" id="GO:0043022">
    <property type="term" value="F:ribosome binding"/>
    <property type="evidence" value="ECO:0007669"/>
    <property type="project" value="UniProtKB-UniRule"/>
</dbReference>
<dbReference type="GO" id="GO:0003746">
    <property type="term" value="F:translation elongation factor activity"/>
    <property type="evidence" value="ECO:0007669"/>
    <property type="project" value="UniProtKB-UniRule"/>
</dbReference>
<dbReference type="GO" id="GO:0045727">
    <property type="term" value="P:positive regulation of translation"/>
    <property type="evidence" value="ECO:0007669"/>
    <property type="project" value="UniProtKB-UniRule"/>
</dbReference>
<dbReference type="CDD" id="cd03699">
    <property type="entry name" value="EF4_II"/>
    <property type="match status" value="1"/>
</dbReference>
<dbReference type="CDD" id="cd16260">
    <property type="entry name" value="EF4_III"/>
    <property type="match status" value="1"/>
</dbReference>
<dbReference type="CDD" id="cd01890">
    <property type="entry name" value="LepA"/>
    <property type="match status" value="1"/>
</dbReference>
<dbReference type="CDD" id="cd03709">
    <property type="entry name" value="lepA_C"/>
    <property type="match status" value="1"/>
</dbReference>
<dbReference type="FunFam" id="3.30.70.240:FF:000005">
    <property type="entry name" value="Elongation factor 4"/>
    <property type="match status" value="1"/>
</dbReference>
<dbReference type="FunFam" id="3.40.50.300:FF:000078">
    <property type="entry name" value="Elongation factor 4"/>
    <property type="match status" value="1"/>
</dbReference>
<dbReference type="FunFam" id="2.40.30.10:FF:000015">
    <property type="entry name" value="Translation factor GUF1, mitochondrial"/>
    <property type="match status" value="1"/>
</dbReference>
<dbReference type="FunFam" id="3.30.70.2570:FF:000001">
    <property type="entry name" value="Translation factor GUF1, mitochondrial"/>
    <property type="match status" value="1"/>
</dbReference>
<dbReference type="FunFam" id="3.30.70.870:FF:000004">
    <property type="entry name" value="Translation factor GUF1, mitochondrial"/>
    <property type="match status" value="1"/>
</dbReference>
<dbReference type="Gene3D" id="3.30.70.240">
    <property type="match status" value="1"/>
</dbReference>
<dbReference type="Gene3D" id="3.30.70.2570">
    <property type="entry name" value="Elongation factor 4, C-terminal domain"/>
    <property type="match status" value="1"/>
</dbReference>
<dbReference type="Gene3D" id="3.30.70.870">
    <property type="entry name" value="Elongation Factor G (Translational Gtpase), domain 3"/>
    <property type="match status" value="1"/>
</dbReference>
<dbReference type="Gene3D" id="3.40.50.300">
    <property type="entry name" value="P-loop containing nucleotide triphosphate hydrolases"/>
    <property type="match status" value="1"/>
</dbReference>
<dbReference type="Gene3D" id="2.40.30.10">
    <property type="entry name" value="Translation factors"/>
    <property type="match status" value="1"/>
</dbReference>
<dbReference type="HAMAP" id="MF_00071">
    <property type="entry name" value="LepA"/>
    <property type="match status" value="1"/>
</dbReference>
<dbReference type="InterPro" id="IPR006297">
    <property type="entry name" value="EF-4"/>
</dbReference>
<dbReference type="InterPro" id="IPR035647">
    <property type="entry name" value="EFG_III/V"/>
</dbReference>
<dbReference type="InterPro" id="IPR000640">
    <property type="entry name" value="EFG_V-like"/>
</dbReference>
<dbReference type="InterPro" id="IPR004161">
    <property type="entry name" value="EFTu-like_2"/>
</dbReference>
<dbReference type="InterPro" id="IPR031157">
    <property type="entry name" value="G_TR_CS"/>
</dbReference>
<dbReference type="InterPro" id="IPR038363">
    <property type="entry name" value="LepA_C_sf"/>
</dbReference>
<dbReference type="InterPro" id="IPR013842">
    <property type="entry name" value="LepA_CTD"/>
</dbReference>
<dbReference type="InterPro" id="IPR035654">
    <property type="entry name" value="LepA_IV"/>
</dbReference>
<dbReference type="InterPro" id="IPR027417">
    <property type="entry name" value="P-loop_NTPase"/>
</dbReference>
<dbReference type="InterPro" id="IPR005225">
    <property type="entry name" value="Small_GTP-bd"/>
</dbReference>
<dbReference type="InterPro" id="IPR000795">
    <property type="entry name" value="T_Tr_GTP-bd_dom"/>
</dbReference>
<dbReference type="NCBIfam" id="TIGR01393">
    <property type="entry name" value="lepA"/>
    <property type="match status" value="1"/>
</dbReference>
<dbReference type="NCBIfam" id="TIGR00231">
    <property type="entry name" value="small_GTP"/>
    <property type="match status" value="1"/>
</dbReference>
<dbReference type="PANTHER" id="PTHR43512:SF4">
    <property type="entry name" value="TRANSLATION FACTOR GUF1 HOMOLOG, CHLOROPLASTIC"/>
    <property type="match status" value="1"/>
</dbReference>
<dbReference type="PANTHER" id="PTHR43512">
    <property type="entry name" value="TRANSLATION FACTOR GUF1-RELATED"/>
    <property type="match status" value="1"/>
</dbReference>
<dbReference type="Pfam" id="PF00679">
    <property type="entry name" value="EFG_C"/>
    <property type="match status" value="1"/>
</dbReference>
<dbReference type="Pfam" id="PF00009">
    <property type="entry name" value="GTP_EFTU"/>
    <property type="match status" value="1"/>
</dbReference>
<dbReference type="Pfam" id="PF03144">
    <property type="entry name" value="GTP_EFTU_D2"/>
    <property type="match status" value="1"/>
</dbReference>
<dbReference type="Pfam" id="PF06421">
    <property type="entry name" value="LepA_C"/>
    <property type="match status" value="1"/>
</dbReference>
<dbReference type="PRINTS" id="PR00315">
    <property type="entry name" value="ELONGATNFCT"/>
</dbReference>
<dbReference type="SUPFAM" id="SSF54980">
    <property type="entry name" value="EF-G C-terminal domain-like"/>
    <property type="match status" value="2"/>
</dbReference>
<dbReference type="SUPFAM" id="SSF52540">
    <property type="entry name" value="P-loop containing nucleoside triphosphate hydrolases"/>
    <property type="match status" value="1"/>
</dbReference>
<dbReference type="PROSITE" id="PS00301">
    <property type="entry name" value="G_TR_1"/>
    <property type="match status" value="1"/>
</dbReference>
<dbReference type="PROSITE" id="PS51722">
    <property type="entry name" value="G_TR_2"/>
    <property type="match status" value="1"/>
</dbReference>
<evidence type="ECO:0000255" key="1">
    <source>
        <dbReference type="HAMAP-Rule" id="MF_00071"/>
    </source>
</evidence>
<gene>
    <name evidence="1" type="primary">lepA</name>
    <name type="ordered locus">YPTS_3003</name>
</gene>